<dbReference type="EMBL" id="CP001124">
    <property type="protein sequence ID" value="ACH39614.1"/>
    <property type="molecule type" value="Genomic_DNA"/>
</dbReference>
<dbReference type="RefSeq" id="WP_012531035.1">
    <property type="nucleotide sequence ID" value="NC_011146.1"/>
</dbReference>
<dbReference type="SMR" id="B5EH78"/>
<dbReference type="STRING" id="404380.Gbem_2606"/>
<dbReference type="KEGG" id="gbm:Gbem_2606"/>
<dbReference type="eggNOG" id="COG2156">
    <property type="taxonomic scope" value="Bacteria"/>
</dbReference>
<dbReference type="HOGENOM" id="CLU_077094_2_0_7"/>
<dbReference type="OrthoDB" id="9788285at2"/>
<dbReference type="Proteomes" id="UP000008825">
    <property type="component" value="Chromosome"/>
</dbReference>
<dbReference type="GO" id="GO:0005886">
    <property type="term" value="C:plasma membrane"/>
    <property type="evidence" value="ECO:0007669"/>
    <property type="project" value="UniProtKB-SubCell"/>
</dbReference>
<dbReference type="GO" id="GO:0005524">
    <property type="term" value="F:ATP binding"/>
    <property type="evidence" value="ECO:0007669"/>
    <property type="project" value="UniProtKB-UniRule"/>
</dbReference>
<dbReference type="GO" id="GO:0008556">
    <property type="term" value="F:P-type potassium transmembrane transporter activity"/>
    <property type="evidence" value="ECO:0007669"/>
    <property type="project" value="InterPro"/>
</dbReference>
<dbReference type="HAMAP" id="MF_00276">
    <property type="entry name" value="KdpC"/>
    <property type="match status" value="1"/>
</dbReference>
<dbReference type="InterPro" id="IPR003820">
    <property type="entry name" value="KdpC"/>
</dbReference>
<dbReference type="NCBIfam" id="TIGR00681">
    <property type="entry name" value="kdpC"/>
    <property type="match status" value="1"/>
</dbReference>
<dbReference type="NCBIfam" id="NF001454">
    <property type="entry name" value="PRK00315.1"/>
    <property type="match status" value="1"/>
</dbReference>
<dbReference type="PANTHER" id="PTHR30042">
    <property type="entry name" value="POTASSIUM-TRANSPORTING ATPASE C CHAIN"/>
    <property type="match status" value="1"/>
</dbReference>
<dbReference type="PANTHER" id="PTHR30042:SF2">
    <property type="entry name" value="POTASSIUM-TRANSPORTING ATPASE KDPC SUBUNIT"/>
    <property type="match status" value="1"/>
</dbReference>
<dbReference type="Pfam" id="PF02669">
    <property type="entry name" value="KdpC"/>
    <property type="match status" value="1"/>
</dbReference>
<dbReference type="PIRSF" id="PIRSF001296">
    <property type="entry name" value="K_ATPase_KdpC"/>
    <property type="match status" value="1"/>
</dbReference>
<organism>
    <name type="scientific">Citrifermentans bemidjiense (strain ATCC BAA-1014 / DSM 16622 / JCM 12645 / Bem)</name>
    <name type="common">Geobacter bemidjiensis</name>
    <dbReference type="NCBI Taxonomy" id="404380"/>
    <lineage>
        <taxon>Bacteria</taxon>
        <taxon>Pseudomonadati</taxon>
        <taxon>Thermodesulfobacteriota</taxon>
        <taxon>Desulfuromonadia</taxon>
        <taxon>Geobacterales</taxon>
        <taxon>Geobacteraceae</taxon>
        <taxon>Citrifermentans</taxon>
    </lineage>
</organism>
<keyword id="KW-0067">ATP-binding</keyword>
<keyword id="KW-0997">Cell inner membrane</keyword>
<keyword id="KW-1003">Cell membrane</keyword>
<keyword id="KW-0406">Ion transport</keyword>
<keyword id="KW-0472">Membrane</keyword>
<keyword id="KW-0547">Nucleotide-binding</keyword>
<keyword id="KW-0630">Potassium</keyword>
<keyword id="KW-0633">Potassium transport</keyword>
<keyword id="KW-1185">Reference proteome</keyword>
<keyword id="KW-0812">Transmembrane</keyword>
<keyword id="KW-1133">Transmembrane helix</keyword>
<keyword id="KW-0813">Transport</keyword>
<proteinExistence type="inferred from homology"/>
<evidence type="ECO:0000255" key="1">
    <source>
        <dbReference type="HAMAP-Rule" id="MF_00276"/>
    </source>
</evidence>
<reference key="1">
    <citation type="submission" date="2008-07" db="EMBL/GenBank/DDBJ databases">
        <title>Complete sequence of Geobacter bemidjiensis BEM.</title>
        <authorList>
            <consortium name="US DOE Joint Genome Institute"/>
            <person name="Lucas S."/>
            <person name="Copeland A."/>
            <person name="Lapidus A."/>
            <person name="Glavina del Rio T."/>
            <person name="Dalin E."/>
            <person name="Tice H."/>
            <person name="Bruce D."/>
            <person name="Goodwin L."/>
            <person name="Pitluck S."/>
            <person name="Kiss H."/>
            <person name="Brettin T."/>
            <person name="Detter J.C."/>
            <person name="Han C."/>
            <person name="Kuske C.R."/>
            <person name="Schmutz J."/>
            <person name="Larimer F."/>
            <person name="Land M."/>
            <person name="Hauser L."/>
            <person name="Kyrpides N."/>
            <person name="Lykidis A."/>
            <person name="Lovley D."/>
            <person name="Richardson P."/>
        </authorList>
    </citation>
    <scope>NUCLEOTIDE SEQUENCE [LARGE SCALE GENOMIC DNA]</scope>
    <source>
        <strain>ATCC BAA-1014 / DSM 16622 / JCM 12645 / Bem</strain>
    </source>
</reference>
<name>KDPC_CITBB</name>
<protein>
    <recommendedName>
        <fullName evidence="1">Potassium-transporting ATPase KdpC subunit</fullName>
    </recommendedName>
    <alternativeName>
        <fullName evidence="1">ATP phosphohydrolase [potassium-transporting] C chain</fullName>
    </alternativeName>
    <alternativeName>
        <fullName evidence="1">Potassium-binding and translocating subunit C</fullName>
    </alternativeName>
    <alternativeName>
        <fullName evidence="1">Potassium-translocating ATPase C chain</fullName>
    </alternativeName>
</protein>
<gene>
    <name evidence="1" type="primary">kdpC</name>
    <name type="ordered locus">Gbem_2606</name>
</gene>
<feature type="chain" id="PRO_1000114725" description="Potassium-transporting ATPase KdpC subunit">
    <location>
        <begin position="1"/>
        <end position="190"/>
    </location>
</feature>
<feature type="transmembrane region" description="Helical" evidence="1">
    <location>
        <begin position="9"/>
        <end position="29"/>
    </location>
</feature>
<sequence length="190" mass="20313">MKDIRSALVMFILFTIICGGIYPSVVTGIANAVFPKQAQGSFVTGKDHRVVGSSLIGQPFSDAKYFWPRPSATVDFGYNSMASGGSNSGPTNPEYLKTVAERVKTLHDAGAAGSIPTALVQASGSGLDPDISPEAARIQVARVAKVRGMTAEQVERILAAHTRERQLGFLGEPRVNVLELNLALDNRENR</sequence>
<accession>B5EH78</accession>
<comment type="function">
    <text evidence="1">Part of the high-affinity ATP-driven potassium transport (or Kdp) system, which catalyzes the hydrolysis of ATP coupled with the electrogenic transport of potassium into the cytoplasm. This subunit acts as a catalytic chaperone that increases the ATP-binding affinity of the ATP-hydrolyzing subunit KdpB by the formation of a transient KdpB/KdpC/ATP ternary complex.</text>
</comment>
<comment type="subunit">
    <text evidence="1">The system is composed of three essential subunits: KdpA, KdpB and KdpC.</text>
</comment>
<comment type="subcellular location">
    <subcellularLocation>
        <location evidence="1">Cell inner membrane</location>
        <topology evidence="1">Single-pass membrane protein</topology>
    </subcellularLocation>
</comment>
<comment type="similarity">
    <text evidence="1">Belongs to the KdpC family.</text>
</comment>